<reference key="1">
    <citation type="journal article" date="1988" name="Curr. Genet.">
        <title>The two genes for the P700 chlorophyll a apoproteins on the Euglena gracilis chloroplast genome contain multiple introns.</title>
        <authorList>
            <person name="Cushman J.C."/>
            <person name="Hallick R.B."/>
            <person name="Price C.A."/>
        </authorList>
    </citation>
    <scope>NUCLEOTIDE SEQUENCE [GENOMIC DNA]</scope>
    <source>
        <strain>Z / UTEX 753</strain>
    </source>
</reference>
<reference key="2">
    <citation type="journal article" date="1993" name="Nucleic Acids Res.">
        <title>Complete sequence of Euglena gracilis chloroplast DNA.</title>
        <authorList>
            <person name="Hallick R.B."/>
            <person name="Hong L."/>
            <person name="Drager R.G."/>
            <person name="Favreau M.R."/>
            <person name="Monfort A."/>
            <person name="Orsat B."/>
            <person name="Spielmann A."/>
            <person name="Stutz E."/>
        </authorList>
    </citation>
    <scope>NUCLEOTIDE SEQUENCE [LARGE SCALE GENOMIC DNA]</scope>
    <source>
        <strain>Z / UTEX 753</strain>
    </source>
</reference>
<comment type="function">
    <text evidence="1">PsaA and PsaB bind P700, the primary electron donor of photosystem I (PSI), as well as the electron acceptors A0, A1 and FX. PSI is a plastocyanin/cytochrome c6-ferredoxin oxidoreductase, converting photonic excitation into a charge separation, which transfers an electron from the donor P700 chlorophyll pair to the spectroscopically characterized acceptors A0, A1, FX, FA and FB in turn. Oxidized P700 is reduced on the lumenal side of the thylakoid membrane by plastocyanin or cytochrome c6.</text>
</comment>
<comment type="catalytic activity">
    <reaction evidence="1">
        <text>reduced [plastocyanin] + hnu + oxidized [2Fe-2S]-[ferredoxin] = oxidized [plastocyanin] + reduced [2Fe-2S]-[ferredoxin]</text>
        <dbReference type="Rhea" id="RHEA:30407"/>
        <dbReference type="Rhea" id="RHEA-COMP:10000"/>
        <dbReference type="Rhea" id="RHEA-COMP:10001"/>
        <dbReference type="Rhea" id="RHEA-COMP:10039"/>
        <dbReference type="Rhea" id="RHEA-COMP:10040"/>
        <dbReference type="ChEBI" id="CHEBI:29036"/>
        <dbReference type="ChEBI" id="CHEBI:30212"/>
        <dbReference type="ChEBI" id="CHEBI:33737"/>
        <dbReference type="ChEBI" id="CHEBI:33738"/>
        <dbReference type="ChEBI" id="CHEBI:49552"/>
        <dbReference type="EC" id="1.97.1.12"/>
    </reaction>
</comment>
<comment type="cofactor">
    <text evidence="1">P700 is a chlorophyll a/chlorophyll a' dimer, A0 is one or more chlorophyll a, A1 is one or both phylloquinones and FX is a shared 4Fe-4S iron-sulfur center.</text>
</comment>
<comment type="subunit">
    <text evidence="1">The PsaA/B heterodimer binds the P700 chlorophyll special pair and subsequent electron acceptors. PSI consists of a core antenna complex that captures photons, and an electron transfer chain that converts photonic excitation into a charge separation. The eukaryotic PSI reaction center is composed of at least 11 subunits.</text>
</comment>
<comment type="subcellular location">
    <subcellularLocation>
        <location evidence="1">Plastid</location>
        <location evidence="1">Chloroplast thylakoid membrane</location>
        <topology evidence="1">Multi-pass membrane protein</topology>
    </subcellularLocation>
</comment>
<comment type="similarity">
    <text evidence="1">Belongs to the PsaA/PsaB family.</text>
</comment>
<feature type="chain" id="PRO_0000088614" description="Photosystem I P700 chlorophyll a apoprotein A2">
    <location>
        <begin position="1"/>
        <end position="734"/>
    </location>
</feature>
<feature type="transmembrane region" description="Helical; Name=I" evidence="1">
    <location>
        <begin position="46"/>
        <end position="69"/>
    </location>
</feature>
<feature type="transmembrane region" description="Helical; Name=II" evidence="1">
    <location>
        <begin position="135"/>
        <end position="158"/>
    </location>
</feature>
<feature type="transmembrane region" description="Helical; Name=III" evidence="1">
    <location>
        <begin position="175"/>
        <end position="199"/>
    </location>
</feature>
<feature type="transmembrane region" description="Helical; Name=IV" evidence="1">
    <location>
        <begin position="273"/>
        <end position="291"/>
    </location>
</feature>
<feature type="transmembrane region" description="Helical; Name=V" evidence="1">
    <location>
        <begin position="330"/>
        <end position="353"/>
    </location>
</feature>
<feature type="transmembrane region" description="Helical; Name=VI" evidence="1">
    <location>
        <begin position="369"/>
        <end position="395"/>
    </location>
</feature>
<feature type="transmembrane region" description="Helical; Name=VII" evidence="1">
    <location>
        <begin position="417"/>
        <end position="439"/>
    </location>
</feature>
<feature type="transmembrane region" description="Helical; Name=VIII" evidence="1">
    <location>
        <begin position="517"/>
        <end position="535"/>
    </location>
</feature>
<feature type="transmembrane region" description="Helical; Name=IX" evidence="1">
    <location>
        <begin position="575"/>
        <end position="596"/>
    </location>
</feature>
<feature type="transmembrane region" description="Helical; Name=X" evidence="1">
    <location>
        <begin position="643"/>
        <end position="665"/>
    </location>
</feature>
<feature type="transmembrane region" description="Helical; Name=XI" evidence="1">
    <location>
        <begin position="707"/>
        <end position="727"/>
    </location>
</feature>
<feature type="binding site" evidence="1">
    <location>
        <position position="559"/>
    </location>
    <ligand>
        <name>[4Fe-4S] cluster</name>
        <dbReference type="ChEBI" id="CHEBI:49883"/>
        <note>ligand shared between dimeric partners</note>
    </ligand>
</feature>
<feature type="binding site" evidence="1">
    <location>
        <position position="568"/>
    </location>
    <ligand>
        <name>[4Fe-4S] cluster</name>
        <dbReference type="ChEBI" id="CHEBI:49883"/>
        <note>ligand shared between dimeric partners</note>
    </ligand>
</feature>
<feature type="binding site" description="axial binding residue" evidence="1">
    <location>
        <position position="654"/>
    </location>
    <ligand>
        <name>chlorophyll a</name>
        <dbReference type="ChEBI" id="CHEBI:58416"/>
        <label>B1</label>
    </ligand>
    <ligandPart>
        <name>Mg</name>
        <dbReference type="ChEBI" id="CHEBI:25107"/>
    </ligandPart>
</feature>
<feature type="binding site" description="axial binding residue" evidence="1">
    <location>
        <position position="662"/>
    </location>
    <ligand>
        <name>chlorophyll a</name>
        <dbReference type="ChEBI" id="CHEBI:58416"/>
        <label>B3</label>
    </ligand>
    <ligandPart>
        <name>Mg</name>
        <dbReference type="ChEBI" id="CHEBI:25107"/>
    </ligandPart>
</feature>
<feature type="binding site" evidence="1">
    <location>
        <position position="670"/>
    </location>
    <ligand>
        <name>chlorophyll a</name>
        <dbReference type="ChEBI" id="CHEBI:58416"/>
        <label>B3</label>
    </ligand>
</feature>
<feature type="binding site" evidence="1">
    <location>
        <position position="671"/>
    </location>
    <ligand>
        <name>phylloquinone</name>
        <dbReference type="ChEBI" id="CHEBI:18067"/>
        <label>B</label>
    </ligand>
</feature>
<feature type="sequence conflict" description="In Ref. 1; AAA84452." evidence="2" ref="1">
    <original>QG</original>
    <variation>R</variation>
    <location>
        <begin position="603"/>
        <end position="604"/>
    </location>
</feature>
<protein>
    <recommendedName>
        <fullName evidence="1">Photosystem I P700 chlorophyll a apoprotein A2</fullName>
        <ecNumber evidence="1">1.97.1.12</ecNumber>
    </recommendedName>
    <alternativeName>
        <fullName evidence="1">PSI-B</fullName>
    </alternativeName>
    <alternativeName>
        <fullName evidence="1">PsaB</fullName>
    </alternativeName>
</protein>
<gene>
    <name evidence="1" type="primary">psaB</name>
</gene>
<sequence>MATKFPKFSQGLAQDPTTRRIWFGIATSHDFESHDGMTENNLYQKIFASHFGQLAIIFLWTSGNLFHVAWQGNFEQWIKDPLHIRPIAHAISDPHFGQPAIEAFTRSQFPGPVNIAYSGVYQWWYTIGLRTNVDLYNGSMFLLFIATLALFAGWLHLEPKYSPKVSWFKDAESRLNHHLSALFGLSSLAWSGHLIHVAIPESRGIHVRWDNFLSQLPHPSGLEPFFKGNWSLYSENPDSLTHVFGTASGAGTAVLTFLGGFHPETKSLWLTDIAHHHLAIAVLFIVAGHMYRTNFAIGHRIDDILNAHKAPSGKLGLGHFGLYETINNSLHFQLGLALASLGVITSLVAQHMYSLSPYAFLIQDRTTMAALYTHHQYIAGFIMTGAFAHGAIFFIRDFDEEKNKGNVLSRILDHKEAIISHLSWVTLFLGFHTLGLYVHNDVMQAFGTPEKQILIEPVFAQWIQSAHGKNIYELNILLSSDSSNAFSASQAIWLPGWLNGINDKSTSLFLQIGPGDFLVHHAIALGLHTTTLILVKGALDARGSRLMPDKKDFGYSFPCDGPGRGGTCDISAWDAFYLAVFWMLNTIGWTTFYWHWKHITLWQGNVGQFNESSTYLMGWLRDYLWLNSSQLINGYNPFGMNSLAVWGWMFLFGHLVWATGFMFLISWRGYWQELIETLVWAHERTPITNVFKWTDKPVALSIVQARLVGLAHFSVGYVFTYAAFLIASTSAKFG</sequence>
<proteinExistence type="inferred from homology"/>
<evidence type="ECO:0000255" key="1">
    <source>
        <dbReference type="HAMAP-Rule" id="MF_00482"/>
    </source>
</evidence>
<evidence type="ECO:0000305" key="2"/>
<geneLocation type="chloroplast"/>
<accession>P19431</accession>
<keyword id="KW-0004">4Fe-4S</keyword>
<keyword id="KW-0148">Chlorophyll</keyword>
<keyword id="KW-0150">Chloroplast</keyword>
<keyword id="KW-0157">Chromophore</keyword>
<keyword id="KW-0249">Electron transport</keyword>
<keyword id="KW-0408">Iron</keyword>
<keyword id="KW-0411">Iron-sulfur</keyword>
<keyword id="KW-0460">Magnesium</keyword>
<keyword id="KW-0472">Membrane</keyword>
<keyword id="KW-0479">Metal-binding</keyword>
<keyword id="KW-0560">Oxidoreductase</keyword>
<keyword id="KW-0602">Photosynthesis</keyword>
<keyword id="KW-0603">Photosystem I</keyword>
<keyword id="KW-0934">Plastid</keyword>
<keyword id="KW-0793">Thylakoid</keyword>
<keyword id="KW-0812">Transmembrane</keyword>
<keyword id="KW-1133">Transmembrane helix</keyword>
<keyword id="KW-0813">Transport</keyword>
<name>PSAB_EUGGR</name>
<dbReference type="EC" id="1.97.1.12" evidence="1"/>
<dbReference type="EMBL" id="Z11874">
    <property type="protein sequence ID" value="CAA77911.1"/>
    <property type="molecule type" value="Genomic_DNA"/>
</dbReference>
<dbReference type="EMBL" id="M37526">
    <property type="protein sequence ID" value="AAA84452.1"/>
    <property type="molecule type" value="Genomic_DNA"/>
</dbReference>
<dbReference type="EMBL" id="X70810">
    <property type="protein sequence ID" value="CAA50094.1"/>
    <property type="molecule type" value="Genomic_DNA"/>
</dbReference>
<dbReference type="PIR" id="S26072">
    <property type="entry name" value="S26072"/>
</dbReference>
<dbReference type="RefSeq" id="NP_041907.1">
    <property type="nucleotide sequence ID" value="NC_001603.2"/>
</dbReference>
<dbReference type="SMR" id="P19431"/>
<dbReference type="GeneID" id="807516"/>
<dbReference type="GO" id="GO:0009535">
    <property type="term" value="C:chloroplast thylakoid membrane"/>
    <property type="evidence" value="ECO:0007669"/>
    <property type="project" value="UniProtKB-SubCell"/>
</dbReference>
<dbReference type="GO" id="GO:0009522">
    <property type="term" value="C:photosystem I"/>
    <property type="evidence" value="ECO:0007669"/>
    <property type="project" value="UniProtKB-KW"/>
</dbReference>
<dbReference type="GO" id="GO:0051539">
    <property type="term" value="F:4 iron, 4 sulfur cluster binding"/>
    <property type="evidence" value="ECO:0007669"/>
    <property type="project" value="UniProtKB-KW"/>
</dbReference>
<dbReference type="GO" id="GO:0016168">
    <property type="term" value="F:chlorophyll binding"/>
    <property type="evidence" value="ECO:0007669"/>
    <property type="project" value="UniProtKB-KW"/>
</dbReference>
<dbReference type="GO" id="GO:0009055">
    <property type="term" value="F:electron transfer activity"/>
    <property type="evidence" value="ECO:0007669"/>
    <property type="project" value="UniProtKB-UniRule"/>
</dbReference>
<dbReference type="GO" id="GO:0000287">
    <property type="term" value="F:magnesium ion binding"/>
    <property type="evidence" value="ECO:0007669"/>
    <property type="project" value="UniProtKB-UniRule"/>
</dbReference>
<dbReference type="GO" id="GO:0016491">
    <property type="term" value="F:oxidoreductase activity"/>
    <property type="evidence" value="ECO:0007669"/>
    <property type="project" value="UniProtKB-KW"/>
</dbReference>
<dbReference type="GO" id="GO:0015979">
    <property type="term" value="P:photosynthesis"/>
    <property type="evidence" value="ECO:0007669"/>
    <property type="project" value="UniProtKB-UniRule"/>
</dbReference>
<dbReference type="FunFam" id="1.20.1130.10:FF:000001">
    <property type="entry name" value="Photosystem I P700 chlorophyll a apoprotein A2"/>
    <property type="match status" value="1"/>
</dbReference>
<dbReference type="Gene3D" id="1.20.1130.10">
    <property type="entry name" value="Photosystem I PsaA/PsaB"/>
    <property type="match status" value="1"/>
</dbReference>
<dbReference type="HAMAP" id="MF_00482">
    <property type="entry name" value="PSI_PsaB"/>
    <property type="match status" value="1"/>
</dbReference>
<dbReference type="InterPro" id="IPR001280">
    <property type="entry name" value="PSI_PsaA/B"/>
</dbReference>
<dbReference type="InterPro" id="IPR020586">
    <property type="entry name" value="PSI_PsaA/B_CS"/>
</dbReference>
<dbReference type="InterPro" id="IPR036408">
    <property type="entry name" value="PSI_PsaA/B_sf"/>
</dbReference>
<dbReference type="InterPro" id="IPR006244">
    <property type="entry name" value="PSI_PsaB"/>
</dbReference>
<dbReference type="NCBIfam" id="TIGR01336">
    <property type="entry name" value="psaB"/>
    <property type="match status" value="1"/>
</dbReference>
<dbReference type="PANTHER" id="PTHR30128">
    <property type="entry name" value="OUTER MEMBRANE PROTEIN, OMPA-RELATED"/>
    <property type="match status" value="1"/>
</dbReference>
<dbReference type="PANTHER" id="PTHR30128:SF19">
    <property type="entry name" value="PHOTOSYSTEM I P700 CHLOROPHYLL A APOPROTEIN A1-RELATED"/>
    <property type="match status" value="1"/>
</dbReference>
<dbReference type="Pfam" id="PF00223">
    <property type="entry name" value="PsaA_PsaB"/>
    <property type="match status" value="1"/>
</dbReference>
<dbReference type="PIRSF" id="PIRSF002905">
    <property type="entry name" value="PSI_A"/>
    <property type="match status" value="1"/>
</dbReference>
<dbReference type="PRINTS" id="PR00257">
    <property type="entry name" value="PHOTSYSPSAAB"/>
</dbReference>
<dbReference type="SUPFAM" id="SSF81558">
    <property type="entry name" value="Photosystem I subunits PsaA/PsaB"/>
    <property type="match status" value="1"/>
</dbReference>
<dbReference type="PROSITE" id="PS00419">
    <property type="entry name" value="PHOTOSYSTEM_I_PSAAB"/>
    <property type="match status" value="1"/>
</dbReference>
<organism>
    <name type="scientific">Euglena gracilis</name>
    <dbReference type="NCBI Taxonomy" id="3039"/>
    <lineage>
        <taxon>Eukaryota</taxon>
        <taxon>Discoba</taxon>
        <taxon>Euglenozoa</taxon>
        <taxon>Euglenida</taxon>
        <taxon>Spirocuta</taxon>
        <taxon>Euglenophyceae</taxon>
        <taxon>Euglenales</taxon>
        <taxon>Euglenaceae</taxon>
        <taxon>Euglena</taxon>
    </lineage>
</organism>